<name>CLPX2_WOLSU</name>
<organism>
    <name type="scientific">Wolinella succinogenes (strain ATCC 29543 / DSM 1740 / CCUG 13145 / JCM 31913 / LMG 7466 / NCTC 11488 / FDC 602W)</name>
    <name type="common">Vibrio succinogenes</name>
    <dbReference type="NCBI Taxonomy" id="273121"/>
    <lineage>
        <taxon>Bacteria</taxon>
        <taxon>Pseudomonadati</taxon>
        <taxon>Campylobacterota</taxon>
        <taxon>Epsilonproteobacteria</taxon>
        <taxon>Campylobacterales</taxon>
        <taxon>Helicobacteraceae</taxon>
        <taxon>Wolinella</taxon>
    </lineage>
</organism>
<sequence length="397" mass="44284">MKNLQCSYCGKKEPLVKRIFGGSHQAFICNECIVEFFNLLEREEENRKQKDVRSHLPKPQEIAQFLDQYVISQEKAKMALSVALYNHYKRISYPKHHHIELEKSNILLLGPSGSGKTLLAKTLARVLNIPFAMSDATALTEAGYVGEDVESILSRLLHAASFDIEKAQKGIVYIDEIDKIAKKGESVQSGRDIGGEGVQQGLLKILEGASVYVPLKGARKNSNTETVLFDTKDVLFICGGAFVGIKEERGEKRSGFLASNPSSPTQRTLRKQLLSYGMIPEFIGRIPLILELEPLNLESLVKILKEPKDSIIAQYQYLFSLDGVKLEFTDEALLAIAQKSLDEELGARGLRHILEEILMPLLFEIPSKEEVTQVSITQGFVLGNSEALILEPRREDG</sequence>
<accession>Q7M8U5</accession>
<dbReference type="EMBL" id="BX571660">
    <property type="protein sequence ID" value="CAE10468.1"/>
    <property type="molecule type" value="Genomic_DNA"/>
</dbReference>
<dbReference type="RefSeq" id="WP_011139253.1">
    <property type="nucleotide sequence ID" value="NC_005090.1"/>
</dbReference>
<dbReference type="SMR" id="Q7M8U5"/>
<dbReference type="STRING" id="273121.WS1403"/>
<dbReference type="KEGG" id="wsu:WS1403"/>
<dbReference type="eggNOG" id="COG1219">
    <property type="taxonomic scope" value="Bacteria"/>
</dbReference>
<dbReference type="HOGENOM" id="CLU_014218_8_2_7"/>
<dbReference type="Proteomes" id="UP000000422">
    <property type="component" value="Chromosome"/>
</dbReference>
<dbReference type="GO" id="GO:0005524">
    <property type="term" value="F:ATP binding"/>
    <property type="evidence" value="ECO:0007669"/>
    <property type="project" value="UniProtKB-UniRule"/>
</dbReference>
<dbReference type="GO" id="GO:0016887">
    <property type="term" value="F:ATP hydrolysis activity"/>
    <property type="evidence" value="ECO:0007669"/>
    <property type="project" value="InterPro"/>
</dbReference>
<dbReference type="GO" id="GO:0140662">
    <property type="term" value="F:ATP-dependent protein folding chaperone"/>
    <property type="evidence" value="ECO:0007669"/>
    <property type="project" value="InterPro"/>
</dbReference>
<dbReference type="GO" id="GO:0046983">
    <property type="term" value="F:protein dimerization activity"/>
    <property type="evidence" value="ECO:0007669"/>
    <property type="project" value="InterPro"/>
</dbReference>
<dbReference type="GO" id="GO:0051082">
    <property type="term" value="F:unfolded protein binding"/>
    <property type="evidence" value="ECO:0007669"/>
    <property type="project" value="UniProtKB-UniRule"/>
</dbReference>
<dbReference type="GO" id="GO:0008270">
    <property type="term" value="F:zinc ion binding"/>
    <property type="evidence" value="ECO:0007669"/>
    <property type="project" value="InterPro"/>
</dbReference>
<dbReference type="GO" id="GO:0051603">
    <property type="term" value="P:proteolysis involved in protein catabolic process"/>
    <property type="evidence" value="ECO:0007669"/>
    <property type="project" value="TreeGrafter"/>
</dbReference>
<dbReference type="FunFam" id="1.10.8.60:FF:000002">
    <property type="entry name" value="ATP-dependent Clp protease ATP-binding subunit ClpX"/>
    <property type="match status" value="1"/>
</dbReference>
<dbReference type="Gene3D" id="1.10.8.60">
    <property type="match status" value="1"/>
</dbReference>
<dbReference type="Gene3D" id="6.20.220.10">
    <property type="entry name" value="ClpX chaperone, C4-type zinc finger domain"/>
    <property type="match status" value="1"/>
</dbReference>
<dbReference type="Gene3D" id="3.40.50.300">
    <property type="entry name" value="P-loop containing nucleotide triphosphate hydrolases"/>
    <property type="match status" value="1"/>
</dbReference>
<dbReference type="HAMAP" id="MF_00175">
    <property type="entry name" value="ClpX"/>
    <property type="match status" value="1"/>
</dbReference>
<dbReference type="InterPro" id="IPR003593">
    <property type="entry name" value="AAA+_ATPase"/>
</dbReference>
<dbReference type="InterPro" id="IPR050052">
    <property type="entry name" value="ATP-dep_Clp_protease_ClpX"/>
</dbReference>
<dbReference type="InterPro" id="IPR003959">
    <property type="entry name" value="ATPase_AAA_core"/>
</dbReference>
<dbReference type="InterPro" id="IPR019489">
    <property type="entry name" value="Clp_ATPase_C"/>
</dbReference>
<dbReference type="InterPro" id="IPR004487">
    <property type="entry name" value="Clp_protease_ATP-bd_su_ClpX"/>
</dbReference>
<dbReference type="InterPro" id="IPR046425">
    <property type="entry name" value="ClpX_bact"/>
</dbReference>
<dbReference type="InterPro" id="IPR027417">
    <property type="entry name" value="P-loop_NTPase"/>
</dbReference>
<dbReference type="InterPro" id="IPR010603">
    <property type="entry name" value="Znf_CppX_C4"/>
</dbReference>
<dbReference type="InterPro" id="IPR038366">
    <property type="entry name" value="Znf_CppX_C4_sf"/>
</dbReference>
<dbReference type="NCBIfam" id="TIGR00382">
    <property type="entry name" value="clpX"/>
    <property type="match status" value="1"/>
</dbReference>
<dbReference type="NCBIfam" id="NF003745">
    <property type="entry name" value="PRK05342.1"/>
    <property type="match status" value="1"/>
</dbReference>
<dbReference type="PANTHER" id="PTHR48102:SF7">
    <property type="entry name" value="ATP-DEPENDENT CLP PROTEASE ATP-BINDING SUBUNIT CLPX-LIKE, MITOCHONDRIAL"/>
    <property type="match status" value="1"/>
</dbReference>
<dbReference type="PANTHER" id="PTHR48102">
    <property type="entry name" value="ATP-DEPENDENT CLP PROTEASE ATP-BINDING SUBUNIT CLPX-LIKE, MITOCHONDRIAL-RELATED"/>
    <property type="match status" value="1"/>
</dbReference>
<dbReference type="Pfam" id="PF07724">
    <property type="entry name" value="AAA_2"/>
    <property type="match status" value="1"/>
</dbReference>
<dbReference type="Pfam" id="PF10431">
    <property type="entry name" value="ClpB_D2-small"/>
    <property type="match status" value="1"/>
</dbReference>
<dbReference type="Pfam" id="PF06689">
    <property type="entry name" value="zf-C4_ClpX"/>
    <property type="match status" value="1"/>
</dbReference>
<dbReference type="SMART" id="SM00382">
    <property type="entry name" value="AAA"/>
    <property type="match status" value="1"/>
</dbReference>
<dbReference type="SMART" id="SM01086">
    <property type="entry name" value="ClpB_D2-small"/>
    <property type="match status" value="1"/>
</dbReference>
<dbReference type="SMART" id="SM00994">
    <property type="entry name" value="zf-C4_ClpX"/>
    <property type="match status" value="1"/>
</dbReference>
<dbReference type="SUPFAM" id="SSF57716">
    <property type="entry name" value="Glucocorticoid receptor-like (DNA-binding domain)"/>
    <property type="match status" value="1"/>
</dbReference>
<dbReference type="SUPFAM" id="SSF52540">
    <property type="entry name" value="P-loop containing nucleoside triphosphate hydrolases"/>
    <property type="match status" value="1"/>
</dbReference>
<dbReference type="PROSITE" id="PS51902">
    <property type="entry name" value="CLPX_ZB"/>
    <property type="match status" value="1"/>
</dbReference>
<comment type="function">
    <text evidence="1">ATP-dependent specificity component of the Clp protease. It directs the protease to specific substrates. Can perform chaperone functions in the absence of ClpP.</text>
</comment>
<comment type="subunit">
    <text evidence="1">Component of the ClpX-ClpP complex. Forms a hexameric ring that, in the presence of ATP, binds to fourteen ClpP subunits assembled into a disk-like structure with a central cavity, resembling the structure of eukaryotic proteasomes.</text>
</comment>
<comment type="similarity">
    <text evidence="1">Belongs to the ClpX chaperone family.</text>
</comment>
<keyword id="KW-0067">ATP-binding</keyword>
<keyword id="KW-0143">Chaperone</keyword>
<keyword id="KW-0479">Metal-binding</keyword>
<keyword id="KW-0547">Nucleotide-binding</keyword>
<keyword id="KW-1185">Reference proteome</keyword>
<keyword id="KW-0862">Zinc</keyword>
<gene>
    <name evidence="1" type="primary">clpX2</name>
    <name type="ordered locus">WS1403</name>
</gene>
<reference key="1">
    <citation type="journal article" date="2003" name="Proc. Natl. Acad. Sci. U.S.A.">
        <title>Complete genome sequence and analysis of Wolinella succinogenes.</title>
        <authorList>
            <person name="Baar C."/>
            <person name="Eppinger M."/>
            <person name="Raddatz G."/>
            <person name="Simon J."/>
            <person name="Lanz C."/>
            <person name="Klimmek O."/>
            <person name="Nandakumar R."/>
            <person name="Gross R."/>
            <person name="Rosinus A."/>
            <person name="Keller H."/>
            <person name="Jagtap P."/>
            <person name="Linke B."/>
            <person name="Meyer F."/>
            <person name="Lederer H."/>
            <person name="Schuster S.C."/>
        </authorList>
    </citation>
    <scope>NUCLEOTIDE SEQUENCE [LARGE SCALE GENOMIC DNA]</scope>
    <source>
        <strain>ATCC 29543 / DSM 1740 / CCUG 13145 / JCM 31913 / LMG 7466 / NCTC 11488 / FDC 602W</strain>
    </source>
</reference>
<evidence type="ECO:0000255" key="1">
    <source>
        <dbReference type="HAMAP-Rule" id="MF_00175"/>
    </source>
</evidence>
<evidence type="ECO:0000255" key="2">
    <source>
        <dbReference type="PROSITE-ProRule" id="PRU01250"/>
    </source>
</evidence>
<proteinExistence type="inferred from homology"/>
<protein>
    <recommendedName>
        <fullName evidence="1">ATP-dependent Clp protease ATP-binding subunit ClpX 2</fullName>
    </recommendedName>
</protein>
<feature type="chain" id="PRO_0000160458" description="ATP-dependent Clp protease ATP-binding subunit ClpX 2">
    <location>
        <begin position="1"/>
        <end position="397"/>
    </location>
</feature>
<feature type="domain" description="ClpX-type ZB" evidence="2">
    <location>
        <begin position="1"/>
        <end position="48"/>
    </location>
</feature>
<feature type="binding site" evidence="2">
    <location>
        <position position="6"/>
    </location>
    <ligand>
        <name>Zn(2+)</name>
        <dbReference type="ChEBI" id="CHEBI:29105"/>
    </ligand>
</feature>
<feature type="binding site" evidence="2">
    <location>
        <position position="9"/>
    </location>
    <ligand>
        <name>Zn(2+)</name>
        <dbReference type="ChEBI" id="CHEBI:29105"/>
    </ligand>
</feature>
<feature type="binding site" evidence="2">
    <location>
        <position position="29"/>
    </location>
    <ligand>
        <name>Zn(2+)</name>
        <dbReference type="ChEBI" id="CHEBI:29105"/>
    </ligand>
</feature>
<feature type="binding site" evidence="2">
    <location>
        <position position="32"/>
    </location>
    <ligand>
        <name>Zn(2+)</name>
        <dbReference type="ChEBI" id="CHEBI:29105"/>
    </ligand>
</feature>
<feature type="binding site" evidence="1">
    <location>
        <begin position="111"/>
        <end position="118"/>
    </location>
    <ligand>
        <name>ATP</name>
        <dbReference type="ChEBI" id="CHEBI:30616"/>
    </ligand>
</feature>